<evidence type="ECO:0000250" key="1"/>
<evidence type="ECO:0000250" key="2">
    <source>
        <dbReference type="UniProtKB" id="P00157"/>
    </source>
</evidence>
<evidence type="ECO:0000250" key="3">
    <source>
        <dbReference type="UniProtKB" id="P00163"/>
    </source>
</evidence>
<evidence type="ECO:0000255" key="4"/>
<evidence type="ECO:0000255" key="5">
    <source>
        <dbReference type="PROSITE-ProRule" id="PRU00967"/>
    </source>
</evidence>
<evidence type="ECO:0000255" key="6">
    <source>
        <dbReference type="PROSITE-ProRule" id="PRU00968"/>
    </source>
</evidence>
<geneLocation type="mitochondrion"/>
<organism>
    <name type="scientific">Cepaea nemoralis</name>
    <name type="common">Banded wood snail</name>
    <dbReference type="NCBI Taxonomy" id="28835"/>
    <lineage>
        <taxon>Eukaryota</taxon>
        <taxon>Metazoa</taxon>
        <taxon>Spiralia</taxon>
        <taxon>Lophotrochozoa</taxon>
        <taxon>Mollusca</taxon>
        <taxon>Gastropoda</taxon>
        <taxon>Heterobranchia</taxon>
        <taxon>Euthyneura</taxon>
        <taxon>Panpulmonata</taxon>
        <taxon>Eupulmonata</taxon>
        <taxon>Stylommatophora</taxon>
        <taxon>Helicina</taxon>
        <taxon>Helicoidea</taxon>
        <taxon>Helicidae</taxon>
        <taxon>Cepaea</taxon>
    </lineage>
</organism>
<proteinExistence type="inferred from homology"/>
<name>CYB_CEPNE</name>
<keyword id="KW-0249">Electron transport</keyword>
<keyword id="KW-0349">Heme</keyword>
<keyword id="KW-0408">Iron</keyword>
<keyword id="KW-0472">Membrane</keyword>
<keyword id="KW-0479">Metal-binding</keyword>
<keyword id="KW-0496">Mitochondrion</keyword>
<keyword id="KW-0999">Mitochondrion inner membrane</keyword>
<keyword id="KW-0679">Respiratory chain</keyword>
<keyword id="KW-0812">Transmembrane</keyword>
<keyword id="KW-1133">Transmembrane helix</keyword>
<keyword id="KW-0813">Transport</keyword>
<keyword id="KW-0830">Ubiquinone</keyword>
<accession>Q34179</accession>
<reference key="1">
    <citation type="journal article" date="1996" name="J. Mol. Evol.">
        <title>Complete DNA sequence of the mitochondrial genome of Cepaea nemoralis (Gastropoda: Pulmonata).</title>
        <authorList>
            <person name="Terrett J.A."/>
            <person name="Miles S."/>
            <person name="Thomas R.H."/>
        </authorList>
    </citation>
    <scope>NUCLEOTIDE SEQUENCE [GENOMIC DNA]</scope>
    <source>
        <tissue>Hepatopancreas</tissue>
    </source>
</reference>
<feature type="chain" id="PRO_0000060753" description="Cytochrome b">
    <location>
        <begin position="1"/>
        <end position="380"/>
    </location>
</feature>
<feature type="transmembrane region" description="Helical" evidence="2">
    <location>
        <begin position="28"/>
        <end position="48"/>
    </location>
</feature>
<feature type="transmembrane region" description="Helical" evidence="2">
    <location>
        <begin position="72"/>
        <end position="93"/>
    </location>
</feature>
<feature type="transmembrane region" description="Helical" evidence="2">
    <location>
        <begin position="109"/>
        <end position="129"/>
    </location>
</feature>
<feature type="transmembrane region" description="Helical" evidence="2">
    <location>
        <begin position="174"/>
        <end position="194"/>
    </location>
</feature>
<feature type="transmembrane region" description="Helical" evidence="2">
    <location>
        <begin position="222"/>
        <end position="243"/>
    </location>
</feature>
<feature type="transmembrane region" description="Helical" evidence="2">
    <location>
        <begin position="285"/>
        <end position="305"/>
    </location>
</feature>
<feature type="transmembrane region" description="Helical" evidence="2">
    <location>
        <begin position="317"/>
        <end position="337"/>
    </location>
</feature>
<feature type="transmembrane region" description="Helical" evidence="4">
    <location>
        <begin position="344"/>
        <end position="364"/>
    </location>
</feature>
<feature type="binding site" description="axial binding residue" evidence="2">
    <location>
        <position position="78"/>
    </location>
    <ligand>
        <name>heme b</name>
        <dbReference type="ChEBI" id="CHEBI:60344"/>
        <label>b562</label>
    </ligand>
    <ligandPart>
        <name>Fe</name>
        <dbReference type="ChEBI" id="CHEBI:18248"/>
    </ligandPart>
</feature>
<feature type="binding site" description="axial binding residue" evidence="2">
    <location>
        <position position="92"/>
    </location>
    <ligand>
        <name>heme b</name>
        <dbReference type="ChEBI" id="CHEBI:60344"/>
        <label>b566</label>
    </ligand>
    <ligandPart>
        <name>Fe</name>
        <dbReference type="ChEBI" id="CHEBI:18248"/>
    </ligandPart>
</feature>
<feature type="binding site" description="axial binding residue" evidence="2">
    <location>
        <position position="178"/>
    </location>
    <ligand>
        <name>heme b</name>
        <dbReference type="ChEBI" id="CHEBI:60344"/>
        <label>b562</label>
    </ligand>
    <ligandPart>
        <name>Fe</name>
        <dbReference type="ChEBI" id="CHEBI:18248"/>
    </ligandPart>
</feature>
<feature type="binding site" description="axial binding residue" evidence="2">
    <location>
        <position position="192"/>
    </location>
    <ligand>
        <name>heme b</name>
        <dbReference type="ChEBI" id="CHEBI:60344"/>
        <label>b566</label>
    </ligand>
    <ligandPart>
        <name>Fe</name>
        <dbReference type="ChEBI" id="CHEBI:18248"/>
    </ligandPart>
</feature>
<feature type="binding site" evidence="2">
    <location>
        <position position="197"/>
    </location>
    <ligand>
        <name>a ubiquinone</name>
        <dbReference type="ChEBI" id="CHEBI:16389"/>
    </ligand>
</feature>
<protein>
    <recommendedName>
        <fullName>Cytochrome b</fullName>
    </recommendedName>
    <alternativeName>
        <fullName>Complex III subunit 3</fullName>
    </alternativeName>
    <alternativeName>
        <fullName>Complex III subunit III</fullName>
    </alternativeName>
    <alternativeName>
        <fullName>Cytochrome b-c1 complex subunit 3</fullName>
    </alternativeName>
    <alternativeName>
        <fullName>Ubiquinol-cytochrome-c reductase complex cytochrome b subunit</fullName>
    </alternativeName>
</protein>
<comment type="function">
    <text evidence="2">Component of the ubiquinol-cytochrome c reductase complex (complex III or cytochrome b-c1 complex) that is part of the mitochondrial respiratory chain. The b-c1 complex mediates electron transfer from ubiquinol to cytochrome c. Contributes to the generation of a proton gradient across the mitochondrial membrane that is then used for ATP synthesis.</text>
</comment>
<comment type="cofactor">
    <cofactor evidence="2">
        <name>heme b</name>
        <dbReference type="ChEBI" id="CHEBI:60344"/>
    </cofactor>
    <text evidence="2">Binds 2 heme b groups non-covalently.</text>
</comment>
<comment type="subunit">
    <text evidence="2">The main subunits of complex b-c1 are: cytochrome b, cytochrome c1 and the Rieske protein.</text>
</comment>
<comment type="subcellular location">
    <subcellularLocation>
        <location evidence="3">Mitochondrion inner membrane</location>
        <topology evidence="3">Multi-pass membrane protein</topology>
    </subcellularLocation>
</comment>
<comment type="miscellaneous">
    <text evidence="1">Heme 1 (or BL or b562) is low-potential and absorbs at about 562 nm, and heme 2 (or BH or b566) is high-potential and absorbs at about 566 nm.</text>
</comment>
<comment type="similarity">
    <text evidence="5 6">Belongs to the cytochrome b family.</text>
</comment>
<comment type="caution">
    <text evidence="2">The full-length protein contains only eight transmembrane helices, not nine as predicted by bioinformatics tools.</text>
</comment>
<gene>
    <name type="primary">MT-CYB</name>
    <name type="synonym">COB</name>
    <name type="synonym">CYTB</name>
    <name type="synonym">MTCYB</name>
</gene>
<sequence length="380" mass="43125">MAPSLKKIVLWSFLALPSPVNISIWWNIGSLLGLLLAMQIMTGIFLSLHYTPMMVSTFSSMVHIMRDVPGGWLVRASHANGASMFFMLMYAHIGRGVYYQSYILQPRTWLVGGNDFLLSMATAFLGYVLPWGQMSYWGATVITNLLSAVPYLGDSLVTWVWGCFSVNQATLNRFYSFHFLLPFVILVFVLVHLLLLHDKGSSNPLGNMSHVSKVSFHPYFTWKILWVFVLLCFLLYVLLCYITLMYLRTPKTFIEANPMVTPTHIQPEWYFLFAYAILRAIPSKIGGVVALAMSVLYLYTFPLALYSSAAATAYNFIGQLLFWGYVSLFFLLTWLGACPVEEPYISLALPLTVMFFVVPGLYMISSSYIIRSFQFLLSLK</sequence>
<dbReference type="EMBL" id="U23045">
    <property type="protein sequence ID" value="AAC09519.1"/>
    <property type="molecule type" value="Genomic_DNA"/>
</dbReference>
<dbReference type="PIR" id="T11381">
    <property type="entry name" value="T11381"/>
</dbReference>
<dbReference type="RefSeq" id="NP_008360.2">
    <property type="nucleotide sequence ID" value="NC_001816.1"/>
</dbReference>
<dbReference type="SMR" id="Q34179"/>
<dbReference type="GO" id="GO:0005743">
    <property type="term" value="C:mitochondrial inner membrane"/>
    <property type="evidence" value="ECO:0007669"/>
    <property type="project" value="UniProtKB-SubCell"/>
</dbReference>
<dbReference type="GO" id="GO:0046872">
    <property type="term" value="F:metal ion binding"/>
    <property type="evidence" value="ECO:0007669"/>
    <property type="project" value="UniProtKB-KW"/>
</dbReference>
<dbReference type="GO" id="GO:0008121">
    <property type="term" value="F:ubiquinol-cytochrome-c reductase activity"/>
    <property type="evidence" value="ECO:0007669"/>
    <property type="project" value="TreeGrafter"/>
</dbReference>
<dbReference type="GO" id="GO:0006122">
    <property type="term" value="P:mitochondrial electron transport, ubiquinol to cytochrome c"/>
    <property type="evidence" value="ECO:0007669"/>
    <property type="project" value="TreeGrafter"/>
</dbReference>
<dbReference type="CDD" id="cd00284">
    <property type="entry name" value="Cytochrome_b_N"/>
    <property type="match status" value="1"/>
</dbReference>
<dbReference type="Gene3D" id="1.20.810.10">
    <property type="entry name" value="Cytochrome Bc1 Complex, Chain C"/>
    <property type="match status" value="1"/>
</dbReference>
<dbReference type="InterPro" id="IPR005798">
    <property type="entry name" value="Cyt_b/b6_C"/>
</dbReference>
<dbReference type="InterPro" id="IPR036150">
    <property type="entry name" value="Cyt_b/b6_C_sf"/>
</dbReference>
<dbReference type="InterPro" id="IPR005797">
    <property type="entry name" value="Cyt_b/b6_N"/>
</dbReference>
<dbReference type="InterPro" id="IPR027387">
    <property type="entry name" value="Cytb/b6-like_sf"/>
</dbReference>
<dbReference type="InterPro" id="IPR048259">
    <property type="entry name" value="Cytochrome_b_N_euk/bac"/>
</dbReference>
<dbReference type="InterPro" id="IPR016174">
    <property type="entry name" value="Di-haem_cyt_TM"/>
</dbReference>
<dbReference type="PANTHER" id="PTHR19271">
    <property type="entry name" value="CYTOCHROME B"/>
    <property type="match status" value="1"/>
</dbReference>
<dbReference type="PANTHER" id="PTHR19271:SF16">
    <property type="entry name" value="CYTOCHROME B"/>
    <property type="match status" value="1"/>
</dbReference>
<dbReference type="Pfam" id="PF00032">
    <property type="entry name" value="Cytochrom_B_C"/>
    <property type="match status" value="1"/>
</dbReference>
<dbReference type="Pfam" id="PF00033">
    <property type="entry name" value="Cytochrome_B"/>
    <property type="match status" value="1"/>
</dbReference>
<dbReference type="SUPFAM" id="SSF81648">
    <property type="entry name" value="a domain/subunit of cytochrome bc1 complex (Ubiquinol-cytochrome c reductase)"/>
    <property type="match status" value="1"/>
</dbReference>
<dbReference type="SUPFAM" id="SSF81342">
    <property type="entry name" value="Transmembrane di-heme cytochromes"/>
    <property type="match status" value="1"/>
</dbReference>
<dbReference type="PROSITE" id="PS51003">
    <property type="entry name" value="CYTB_CTER"/>
    <property type="match status" value="1"/>
</dbReference>
<dbReference type="PROSITE" id="PS51002">
    <property type="entry name" value="CYTB_NTER"/>
    <property type="match status" value="1"/>
</dbReference>